<organism>
    <name type="scientific">Mus musculus</name>
    <name type="common">Mouse</name>
    <dbReference type="NCBI Taxonomy" id="10090"/>
    <lineage>
        <taxon>Eukaryota</taxon>
        <taxon>Metazoa</taxon>
        <taxon>Chordata</taxon>
        <taxon>Craniata</taxon>
        <taxon>Vertebrata</taxon>
        <taxon>Euteleostomi</taxon>
        <taxon>Mammalia</taxon>
        <taxon>Eutheria</taxon>
        <taxon>Euarchontoglires</taxon>
        <taxon>Glires</taxon>
        <taxon>Rodentia</taxon>
        <taxon>Myomorpha</taxon>
        <taxon>Muroidea</taxon>
        <taxon>Muridae</taxon>
        <taxon>Murinae</taxon>
        <taxon>Mus</taxon>
        <taxon>Mus</taxon>
    </lineage>
</organism>
<evidence type="ECO:0000250" key="1">
    <source>
        <dbReference type="UniProtKB" id="E1BUG7"/>
    </source>
</evidence>
<evidence type="ECO:0000250" key="2">
    <source>
        <dbReference type="UniProtKB" id="Q68D10"/>
    </source>
</evidence>
<evidence type="ECO:0000255" key="3"/>
<evidence type="ECO:0000256" key="4">
    <source>
        <dbReference type="SAM" id="MobiDB-lite"/>
    </source>
</evidence>
<evidence type="ECO:0000305" key="5"/>
<keyword id="KW-0007">Acetylation</keyword>
<keyword id="KW-0175">Coiled coil</keyword>
<keyword id="KW-0238">DNA-binding</keyword>
<keyword id="KW-1017">Isopeptide bond</keyword>
<keyword id="KW-0539">Nucleus</keyword>
<keyword id="KW-0597">Phosphoprotein</keyword>
<keyword id="KW-1185">Reference proteome</keyword>
<keyword id="KW-0804">Transcription</keyword>
<keyword id="KW-0805">Transcription regulation</keyword>
<keyword id="KW-0832">Ubl conjugation</keyword>
<protein>
    <recommendedName>
        <fullName>Protein SPT2 homolog</fullName>
    </recommendedName>
    <alternativeName>
        <fullName>SPT2 domain-containing protein 1</fullName>
    </alternativeName>
</protein>
<comment type="function">
    <text evidence="1 2">Histone chaperone that stabilizes pre-existing histone tetramers and regulates replication-independent histone exchange on chromatin. Required for normal chromatin refolding in the coding region of transcribed genes, and for the suppression of spurious transcription. Binds DNA and histones and promotes nucleosome assembly (in vitro). Facilitates formation of tetrameric histone complexes containing histone H3 and H4 (By similarity). Modulates RNA polymerase 1-mediated transcription (By similarity). Binds DNA, with a preference for branched DNA species, such as Y-form DNA and Holliday junction DNA (By similarity).</text>
</comment>
<comment type="subunit">
    <text evidence="2">Interacts with histones. Interacts with a heterotetrameric complex formed by histone H3 and H4, especially when the histone tetramer is not bound to DNA. Interacts with histone H3.3 (By similarity).</text>
</comment>
<comment type="subcellular location">
    <subcellularLocation>
        <location evidence="1">Nucleus</location>
        <location evidence="1">Nucleolus</location>
    </subcellularLocation>
</comment>
<comment type="domain">
    <text evidence="2">The acidic C-terminal domain mediates interaction with histone H3/H4 complexes.</text>
</comment>
<comment type="similarity">
    <text evidence="5">Belongs to the SPT2 family.</text>
</comment>
<reference key="1">
    <citation type="journal article" date="2005" name="Science">
        <title>The transcriptional landscape of the mammalian genome.</title>
        <authorList>
            <person name="Carninci P."/>
            <person name="Kasukawa T."/>
            <person name="Katayama S."/>
            <person name="Gough J."/>
            <person name="Frith M.C."/>
            <person name="Maeda N."/>
            <person name="Oyama R."/>
            <person name="Ravasi T."/>
            <person name="Lenhard B."/>
            <person name="Wells C."/>
            <person name="Kodzius R."/>
            <person name="Shimokawa K."/>
            <person name="Bajic V.B."/>
            <person name="Brenner S.E."/>
            <person name="Batalov S."/>
            <person name="Forrest A.R."/>
            <person name="Zavolan M."/>
            <person name="Davis M.J."/>
            <person name="Wilming L.G."/>
            <person name="Aidinis V."/>
            <person name="Allen J.E."/>
            <person name="Ambesi-Impiombato A."/>
            <person name="Apweiler R."/>
            <person name="Aturaliya R.N."/>
            <person name="Bailey T.L."/>
            <person name="Bansal M."/>
            <person name="Baxter L."/>
            <person name="Beisel K.W."/>
            <person name="Bersano T."/>
            <person name="Bono H."/>
            <person name="Chalk A.M."/>
            <person name="Chiu K.P."/>
            <person name="Choudhary V."/>
            <person name="Christoffels A."/>
            <person name="Clutterbuck D.R."/>
            <person name="Crowe M.L."/>
            <person name="Dalla E."/>
            <person name="Dalrymple B.P."/>
            <person name="de Bono B."/>
            <person name="Della Gatta G."/>
            <person name="di Bernardo D."/>
            <person name="Down T."/>
            <person name="Engstrom P."/>
            <person name="Fagiolini M."/>
            <person name="Faulkner G."/>
            <person name="Fletcher C.F."/>
            <person name="Fukushima T."/>
            <person name="Furuno M."/>
            <person name="Futaki S."/>
            <person name="Gariboldi M."/>
            <person name="Georgii-Hemming P."/>
            <person name="Gingeras T.R."/>
            <person name="Gojobori T."/>
            <person name="Green R.E."/>
            <person name="Gustincich S."/>
            <person name="Harbers M."/>
            <person name="Hayashi Y."/>
            <person name="Hensch T.K."/>
            <person name="Hirokawa N."/>
            <person name="Hill D."/>
            <person name="Huminiecki L."/>
            <person name="Iacono M."/>
            <person name="Ikeo K."/>
            <person name="Iwama A."/>
            <person name="Ishikawa T."/>
            <person name="Jakt M."/>
            <person name="Kanapin A."/>
            <person name="Katoh M."/>
            <person name="Kawasawa Y."/>
            <person name="Kelso J."/>
            <person name="Kitamura H."/>
            <person name="Kitano H."/>
            <person name="Kollias G."/>
            <person name="Krishnan S.P."/>
            <person name="Kruger A."/>
            <person name="Kummerfeld S.K."/>
            <person name="Kurochkin I.V."/>
            <person name="Lareau L.F."/>
            <person name="Lazarevic D."/>
            <person name="Lipovich L."/>
            <person name="Liu J."/>
            <person name="Liuni S."/>
            <person name="McWilliam S."/>
            <person name="Madan Babu M."/>
            <person name="Madera M."/>
            <person name="Marchionni L."/>
            <person name="Matsuda H."/>
            <person name="Matsuzawa S."/>
            <person name="Miki H."/>
            <person name="Mignone F."/>
            <person name="Miyake S."/>
            <person name="Morris K."/>
            <person name="Mottagui-Tabar S."/>
            <person name="Mulder N."/>
            <person name="Nakano N."/>
            <person name="Nakauchi H."/>
            <person name="Ng P."/>
            <person name="Nilsson R."/>
            <person name="Nishiguchi S."/>
            <person name="Nishikawa S."/>
            <person name="Nori F."/>
            <person name="Ohara O."/>
            <person name="Okazaki Y."/>
            <person name="Orlando V."/>
            <person name="Pang K.C."/>
            <person name="Pavan W.J."/>
            <person name="Pavesi G."/>
            <person name="Pesole G."/>
            <person name="Petrovsky N."/>
            <person name="Piazza S."/>
            <person name="Reed J."/>
            <person name="Reid J.F."/>
            <person name="Ring B.Z."/>
            <person name="Ringwald M."/>
            <person name="Rost B."/>
            <person name="Ruan Y."/>
            <person name="Salzberg S.L."/>
            <person name="Sandelin A."/>
            <person name="Schneider C."/>
            <person name="Schoenbach C."/>
            <person name="Sekiguchi K."/>
            <person name="Semple C.A."/>
            <person name="Seno S."/>
            <person name="Sessa L."/>
            <person name="Sheng Y."/>
            <person name="Shibata Y."/>
            <person name="Shimada H."/>
            <person name="Shimada K."/>
            <person name="Silva D."/>
            <person name="Sinclair B."/>
            <person name="Sperling S."/>
            <person name="Stupka E."/>
            <person name="Sugiura K."/>
            <person name="Sultana R."/>
            <person name="Takenaka Y."/>
            <person name="Taki K."/>
            <person name="Tammoja K."/>
            <person name="Tan S.L."/>
            <person name="Tang S."/>
            <person name="Taylor M.S."/>
            <person name="Tegner J."/>
            <person name="Teichmann S.A."/>
            <person name="Ueda H.R."/>
            <person name="van Nimwegen E."/>
            <person name="Verardo R."/>
            <person name="Wei C.L."/>
            <person name="Yagi K."/>
            <person name="Yamanishi H."/>
            <person name="Zabarovsky E."/>
            <person name="Zhu S."/>
            <person name="Zimmer A."/>
            <person name="Hide W."/>
            <person name="Bult C."/>
            <person name="Grimmond S.M."/>
            <person name="Teasdale R.D."/>
            <person name="Liu E.T."/>
            <person name="Brusic V."/>
            <person name="Quackenbush J."/>
            <person name="Wahlestedt C."/>
            <person name="Mattick J.S."/>
            <person name="Hume D.A."/>
            <person name="Kai C."/>
            <person name="Sasaki D."/>
            <person name="Tomaru Y."/>
            <person name="Fukuda S."/>
            <person name="Kanamori-Katayama M."/>
            <person name="Suzuki M."/>
            <person name="Aoki J."/>
            <person name="Arakawa T."/>
            <person name="Iida J."/>
            <person name="Imamura K."/>
            <person name="Itoh M."/>
            <person name="Kato T."/>
            <person name="Kawaji H."/>
            <person name="Kawagashira N."/>
            <person name="Kawashima T."/>
            <person name="Kojima M."/>
            <person name="Kondo S."/>
            <person name="Konno H."/>
            <person name="Nakano K."/>
            <person name="Ninomiya N."/>
            <person name="Nishio T."/>
            <person name="Okada M."/>
            <person name="Plessy C."/>
            <person name="Shibata K."/>
            <person name="Shiraki T."/>
            <person name="Suzuki S."/>
            <person name="Tagami M."/>
            <person name="Waki K."/>
            <person name="Watahiki A."/>
            <person name="Okamura-Oho Y."/>
            <person name="Suzuki H."/>
            <person name="Kawai J."/>
            <person name="Hayashizaki Y."/>
        </authorList>
    </citation>
    <scope>NUCLEOTIDE SEQUENCE [LARGE SCALE MRNA]</scope>
    <source>
        <strain>C57BL/6J</strain>
        <tissue>Thymus</tissue>
    </source>
</reference>
<reference key="2">
    <citation type="journal article" date="2004" name="Genome Res.">
        <title>The status, quality, and expansion of the NIH full-length cDNA project: the Mammalian Gene Collection (MGC).</title>
        <authorList>
            <consortium name="The MGC Project Team"/>
        </authorList>
    </citation>
    <scope>NUCLEOTIDE SEQUENCE [LARGE SCALE MRNA]</scope>
    <source>
        <strain>C57BL/6J</strain>
        <tissue>Brain</tissue>
    </source>
</reference>
<proteinExistence type="evidence at transcript level"/>
<dbReference type="EMBL" id="AK030869">
    <property type="protein sequence ID" value="BAC27165.1"/>
    <property type="molecule type" value="mRNA"/>
</dbReference>
<dbReference type="EMBL" id="BC079859">
    <property type="protein sequence ID" value="AAH79859.1"/>
    <property type="molecule type" value="mRNA"/>
</dbReference>
<dbReference type="CCDS" id="CCDS21293.1"/>
<dbReference type="RefSeq" id="NP_780527.2">
    <property type="nucleotide sequence ID" value="NM_175318.4"/>
</dbReference>
<dbReference type="SMR" id="Q68FG3"/>
<dbReference type="FunCoup" id="Q68FG3">
    <property type="interactions" value="3120"/>
</dbReference>
<dbReference type="STRING" id="10090.ENSMUSP00000059457"/>
<dbReference type="GlyGen" id="Q68FG3">
    <property type="glycosylation" value="4 sites, 3 N-linked glycans (3 sites)"/>
</dbReference>
<dbReference type="iPTMnet" id="Q68FG3"/>
<dbReference type="PhosphoSitePlus" id="Q68FG3"/>
<dbReference type="jPOST" id="Q68FG3"/>
<dbReference type="PaxDb" id="10090-ENSMUSP00000059457"/>
<dbReference type="PeptideAtlas" id="Q68FG3"/>
<dbReference type="ProteomicsDB" id="263334"/>
<dbReference type="Pumba" id="Q68FG3"/>
<dbReference type="Antibodypedia" id="64057">
    <property type="antibodies" value="15 antibodies from 7 providers"/>
</dbReference>
<dbReference type="Ensembl" id="ENSMUST00000061639.10">
    <property type="protein sequence ID" value="ENSMUSP00000059457.8"/>
    <property type="gene ID" value="ENSMUSG00000049516.10"/>
</dbReference>
<dbReference type="GeneID" id="101685"/>
<dbReference type="KEGG" id="mmu:101685"/>
<dbReference type="UCSC" id="uc009gzx.2">
    <property type="organism name" value="mouse"/>
</dbReference>
<dbReference type="AGR" id="MGI:2142062"/>
<dbReference type="CTD" id="144108"/>
<dbReference type="MGI" id="MGI:2142062">
    <property type="gene designation" value="Spty2d1"/>
</dbReference>
<dbReference type="VEuPathDB" id="HostDB:ENSMUSG00000049516"/>
<dbReference type="eggNOG" id="ENOG502QWHS">
    <property type="taxonomic scope" value="Eukaryota"/>
</dbReference>
<dbReference type="GeneTree" id="ENSGT00940000154133"/>
<dbReference type="HOGENOM" id="CLU_025934_0_0_1"/>
<dbReference type="InParanoid" id="Q68FG3"/>
<dbReference type="OMA" id="GPMATPH"/>
<dbReference type="OrthoDB" id="6259853at2759"/>
<dbReference type="PhylomeDB" id="Q68FG3"/>
<dbReference type="TreeFam" id="TF350176"/>
<dbReference type="BioGRID-ORCS" id="101685">
    <property type="hits" value="9 hits in 77 CRISPR screens"/>
</dbReference>
<dbReference type="ChiTaRS" id="Spty2d1">
    <property type="organism name" value="mouse"/>
</dbReference>
<dbReference type="PRO" id="PR:Q68FG3"/>
<dbReference type="Proteomes" id="UP000000589">
    <property type="component" value="Chromosome 7"/>
</dbReference>
<dbReference type="RNAct" id="Q68FG3">
    <property type="molecule type" value="protein"/>
</dbReference>
<dbReference type="Bgee" id="ENSMUSG00000049516">
    <property type="expression patterns" value="Expressed in humerus cartilage element and 225 other cell types or tissues"/>
</dbReference>
<dbReference type="GO" id="GO:0005730">
    <property type="term" value="C:nucleolus"/>
    <property type="evidence" value="ECO:0000250"/>
    <property type="project" value="UniProtKB"/>
</dbReference>
<dbReference type="GO" id="GO:0005654">
    <property type="term" value="C:nucleoplasm"/>
    <property type="evidence" value="ECO:0007669"/>
    <property type="project" value="Ensembl"/>
</dbReference>
<dbReference type="GO" id="GO:0003677">
    <property type="term" value="F:DNA binding"/>
    <property type="evidence" value="ECO:0000250"/>
    <property type="project" value="UniProtKB"/>
</dbReference>
<dbReference type="GO" id="GO:0042393">
    <property type="term" value="F:histone binding"/>
    <property type="evidence" value="ECO:0000250"/>
    <property type="project" value="UniProtKB"/>
</dbReference>
<dbReference type="GO" id="GO:0140713">
    <property type="term" value="F:histone chaperone activity"/>
    <property type="evidence" value="ECO:0000250"/>
    <property type="project" value="UniProtKB"/>
</dbReference>
<dbReference type="GO" id="GO:0001042">
    <property type="term" value="F:RNA polymerase I core binding"/>
    <property type="evidence" value="ECO:0000250"/>
    <property type="project" value="UniProtKB"/>
</dbReference>
<dbReference type="GO" id="GO:0031507">
    <property type="term" value="P:heterochromatin formation"/>
    <property type="evidence" value="ECO:0000250"/>
    <property type="project" value="UniProtKB"/>
</dbReference>
<dbReference type="GO" id="GO:0006334">
    <property type="term" value="P:nucleosome assembly"/>
    <property type="evidence" value="ECO:0000250"/>
    <property type="project" value="UniProtKB"/>
</dbReference>
<dbReference type="GO" id="GO:0006355">
    <property type="term" value="P:regulation of DNA-templated transcription"/>
    <property type="evidence" value="ECO:0000250"/>
    <property type="project" value="UniProtKB"/>
</dbReference>
<dbReference type="InterPro" id="IPR013256">
    <property type="entry name" value="Chromatin_SPT2"/>
</dbReference>
<dbReference type="InterPro" id="IPR054552">
    <property type="entry name" value="SPT2_N"/>
</dbReference>
<dbReference type="PANTHER" id="PTHR22691:SF8">
    <property type="entry name" value="PROTEIN SPT2 HOMOLOG"/>
    <property type="match status" value="1"/>
</dbReference>
<dbReference type="PANTHER" id="PTHR22691">
    <property type="entry name" value="YEAST SPT2-RELATED"/>
    <property type="match status" value="1"/>
</dbReference>
<dbReference type="Pfam" id="PF08243">
    <property type="entry name" value="SPT2"/>
    <property type="match status" value="1"/>
</dbReference>
<dbReference type="Pfam" id="PF22878">
    <property type="entry name" value="SPT2_N"/>
    <property type="match status" value="1"/>
</dbReference>
<dbReference type="SMART" id="SM00784">
    <property type="entry name" value="SPT2"/>
    <property type="match status" value="1"/>
</dbReference>
<sequence>MDFREILLIASKGQGVNHVPKRYSLAVGPPKKDPKVKGVQSAAVQAFLRRKEEELRQKALEEKKRKEELVKKRIELKHDKKARAMAKRTKDNFHGYDGIPVEEKTKKKQLVESHLNQGTDQEYDVEEEDFIDYNQAELDQDYEEEQEPPKAESKPKAPLKSAPSPMNFTDLLRLAEKKQFEPVEIKVVKKAEDRPLTAEELREREFLERKHRKKKPEPDAKLPPPVLKKAPSHKDIMGTKPSRGAGDRQLASKGLPFPQAEKKFRPSTASEKQAALSSPKSLPGERTKVGSGSSTQPSLREGHNRPVFNGAGKPRPSTCSPSVPKTPASGTQKSASEHKAKKPLPSHPSHSKPGPTVLSHNKSKSPGVRQPGSNSGSAPGQPNPGTARPTLSSGPVPRRQNGSSSSGPEQSAGGIRKLASNSHLSGRTLNGTNGPGRPASSSSGPGRPISGSAGSGRPVGSSGGPGQPVNNPHDLRRPMNSLSSPGRAVSGPGRSISGSIPAGRTVNSGPGRPVSSLGPGRAVSNPGLPTKPRCTVVSETISSKNIISRSSNGQINGMKPLLSGYRSAQGPQRLPFPTGYKRPREYEEDDDDEYDSEMDDFIEDEGEPQEEISKHIREIFGYDRKKYKDESDYALRYMESSWKEQQKEEAKSLRLGMQEDLEEMRREEEELKRRKAKKLKRH</sequence>
<accession>Q68FG3</accession>
<accession>Q8BIR1</accession>
<name>SPT2_MOUSE</name>
<gene>
    <name type="primary">Spty2d1</name>
</gene>
<feature type="chain" id="PRO_0000315737" description="Protein SPT2 homolog">
    <location>
        <begin position="1"/>
        <end position="682"/>
    </location>
</feature>
<feature type="region of interest" description="Important for interaction with DNA" evidence="2">
    <location>
        <begin position="1"/>
        <end position="569"/>
    </location>
</feature>
<feature type="region of interest" description="Disordered" evidence="4">
    <location>
        <begin position="80"/>
        <end position="170"/>
    </location>
</feature>
<feature type="region of interest" description="Disordered" evidence="4">
    <location>
        <begin position="187"/>
        <end position="533"/>
    </location>
</feature>
<feature type="region of interest" description="Disordered" evidence="4">
    <location>
        <begin position="549"/>
        <end position="595"/>
    </location>
</feature>
<feature type="region of interest" description="Important for interaction with histones" evidence="2">
    <location>
        <begin position="570"/>
        <end position="682"/>
    </location>
</feature>
<feature type="region of interest" description="Disordered" evidence="4">
    <location>
        <begin position="641"/>
        <end position="682"/>
    </location>
</feature>
<feature type="coiled-coil region" evidence="3">
    <location>
        <begin position="46"/>
        <end position="82"/>
    </location>
</feature>
<feature type="coiled-coil region" evidence="3">
    <location>
        <begin position="642"/>
        <end position="682"/>
    </location>
</feature>
<feature type="compositionally biased region" description="Basic and acidic residues" evidence="4">
    <location>
        <begin position="101"/>
        <end position="111"/>
    </location>
</feature>
<feature type="compositionally biased region" description="Acidic residues" evidence="4">
    <location>
        <begin position="121"/>
        <end position="131"/>
    </location>
</feature>
<feature type="compositionally biased region" description="Low complexity" evidence="4">
    <location>
        <begin position="156"/>
        <end position="165"/>
    </location>
</feature>
<feature type="compositionally biased region" description="Basic and acidic residues" evidence="4">
    <location>
        <begin position="187"/>
        <end position="208"/>
    </location>
</feature>
<feature type="compositionally biased region" description="Polar residues" evidence="4">
    <location>
        <begin position="267"/>
        <end position="280"/>
    </location>
</feature>
<feature type="compositionally biased region" description="Polar residues" evidence="4">
    <location>
        <begin position="317"/>
        <end position="334"/>
    </location>
</feature>
<feature type="compositionally biased region" description="Polar residues" evidence="4">
    <location>
        <begin position="371"/>
        <end position="393"/>
    </location>
</feature>
<feature type="compositionally biased region" description="Polar residues" evidence="4">
    <location>
        <begin position="400"/>
        <end position="409"/>
    </location>
</feature>
<feature type="compositionally biased region" description="Polar residues" evidence="4">
    <location>
        <begin position="419"/>
        <end position="432"/>
    </location>
</feature>
<feature type="compositionally biased region" description="Low complexity" evidence="4">
    <location>
        <begin position="435"/>
        <end position="460"/>
    </location>
</feature>
<feature type="compositionally biased region" description="Low complexity" evidence="4">
    <location>
        <begin position="490"/>
        <end position="504"/>
    </location>
</feature>
<feature type="compositionally biased region" description="Acidic residues" evidence="4">
    <location>
        <begin position="586"/>
        <end position="595"/>
    </location>
</feature>
<feature type="compositionally biased region" description="Basic and acidic residues" evidence="4">
    <location>
        <begin position="641"/>
        <end position="652"/>
    </location>
</feature>
<feature type="compositionally biased region" description="Basic and acidic residues" evidence="4">
    <location>
        <begin position="663"/>
        <end position="672"/>
    </location>
</feature>
<feature type="compositionally biased region" description="Basic residues" evidence="4">
    <location>
        <begin position="673"/>
        <end position="682"/>
    </location>
</feature>
<feature type="modified residue" description="Phosphoserine" evidence="2">
    <location>
        <position position="277"/>
    </location>
</feature>
<feature type="modified residue" description="N6-acetyllysine" evidence="2">
    <location>
        <position position="581"/>
    </location>
</feature>
<feature type="modified residue" description="Phosphoserine" evidence="2">
    <location>
        <position position="596"/>
    </location>
</feature>
<feature type="cross-link" description="Glycyl lysine isopeptide (Lys-Gly) (interchain with G-Cter in SUMO2)" evidence="2">
    <location>
        <position position="37"/>
    </location>
</feature>
<feature type="cross-link" description="Glycyl lysine isopeptide (Lys-Gly) (interchain with G-Cter in SUMO2)" evidence="2">
    <location>
        <position position="186"/>
    </location>
</feature>
<feature type="sequence conflict" description="In Ref. 1; BAC27165." evidence="5" ref="1">
    <original>E</original>
    <variation>K</variation>
    <location>
        <position position="147"/>
    </location>
</feature>